<accession>P31424</accession>
<evidence type="ECO:0000250" key="1"/>
<evidence type="ECO:0000250" key="2">
    <source>
        <dbReference type="UniProtKB" id="P41594"/>
    </source>
</evidence>
<evidence type="ECO:0000250" key="3">
    <source>
        <dbReference type="UniProtKB" id="Q3UVX5"/>
    </source>
</evidence>
<evidence type="ECO:0000255" key="4"/>
<evidence type="ECO:0000256" key="5">
    <source>
        <dbReference type="SAM" id="MobiDB-lite"/>
    </source>
</evidence>
<evidence type="ECO:0000269" key="6">
    <source>
    </source>
</evidence>
<evidence type="ECO:0000269" key="7">
    <source>
    </source>
</evidence>
<evidence type="ECO:0000269" key="8">
    <source>
    </source>
</evidence>
<evidence type="ECO:0000269" key="9">
    <source>
    </source>
</evidence>
<evidence type="ECO:0000269" key="10">
    <source>
    </source>
</evidence>
<evidence type="ECO:0000269" key="11">
    <source>
    </source>
</evidence>
<evidence type="ECO:0000269" key="12">
    <source>
    </source>
</evidence>
<evidence type="ECO:0000269" key="13">
    <source>
    </source>
</evidence>
<evidence type="ECO:0000303" key="14">
    <source>
    </source>
</evidence>
<evidence type="ECO:0000305" key="15"/>
<evidence type="ECO:0007744" key="16">
    <source>
    </source>
</evidence>
<gene>
    <name type="primary">Grm5</name>
    <name type="synonym">Gprc1e</name>
    <name type="synonym">Mglur5</name>
</gene>
<organism>
    <name type="scientific">Rattus norvegicus</name>
    <name type="common">Rat</name>
    <dbReference type="NCBI Taxonomy" id="10116"/>
    <lineage>
        <taxon>Eukaryota</taxon>
        <taxon>Metazoa</taxon>
        <taxon>Chordata</taxon>
        <taxon>Craniata</taxon>
        <taxon>Vertebrata</taxon>
        <taxon>Euteleostomi</taxon>
        <taxon>Mammalia</taxon>
        <taxon>Eutheria</taxon>
        <taxon>Euarchontoglires</taxon>
        <taxon>Glires</taxon>
        <taxon>Rodentia</taxon>
        <taxon>Myomorpha</taxon>
        <taxon>Muroidea</taxon>
        <taxon>Muridae</taxon>
        <taxon>Murinae</taxon>
        <taxon>Rattus</taxon>
    </lineage>
</organism>
<sequence length="1203" mass="131885">MVLLLILSVLLLKEDVRGSAQSSERRVVAHMPGDIIIGALFSVHHQPTVDKVHERKCGAVREQYGIQRVEAMLHTLERINSDPTLLPNITLGCEIRDSCWHSAVALEQSIEFIRDSLISSEEEEGLVRCVDGSSSFRSKKPIVGVIGPGSSSVAIQVQNLLQLFNIPQIAYSATSMDLSDKTLFKYFMRVVPSDAQQARAMVDIVKRYNWTYVSAVHTEGNYGESGMEAFKDMSAKEGICIAHSYKIYSNAGEQSFDKLLKKLRSHLPKARVVACFCEGMTVRGLLMAMRRLGLAGEFLLLGSDGWADRYDVTDGYQREAVGGITIKLQSPDVKWFDDYYLKLRPETNLRNPWFQEFWQHRFQCRLEGFAQENSKYNKTCNSSLTLRTHHVQDSKMGFVINAIYSMAYGLHNMQMSLCPGYAGLCDAMKPIDGRKLLDSLMKTNFTGVSGDMILFDENGDSPGRYEIMNFKEMGKDYFDYINVGSWDNGELKMDDDEVWSKKNNIIRSVCSEPCEKGQIKVIRKGEVSCCWTCTPCKENEYVFDEYTCKACQLGSWPTDDLTGCDLIPVQYLRWGDPEPIAAVVFACLGLLATLFVTVIFIIYRDTPVVKSSSRELCYIILAGICLGYLCTFCLIAKPKQIYCYLQRIGIGLSPAMSYSALVTKTNRIARILAGSKKKICTKKPRFMSACAQLVIAFILICIQLGIIVALFIMEPPDIMHDYPSIREVYLICNTTNLGVVTPLGYNGLLILSCTFYAFKTRNVPANFNEAKYIAFTMYTTCIIWLAFVPIYFGSNYKIITMCFSVSLSATVALGCMFVPKVYIILAKPERNVRSAFTTSTVVRMHVGDGKSSSAASRSSSLVNLWKRRGSSGETLRYKDRRLAQHKSEIECFTPKGSMGNGGRATMSSSNGKSVTWAQNEKSTRGQHLWQRLSVHINKKENPNQTAVIKPFPKSTENRGPGAAAGGGSGPGVAGAGNAGCTATGGPEPPDAGPKALYDVAEAEESFPAAARPRSPSPISTLSHLAGSAGRTDDDAPSLHSETAARSSSSQGSLMEQISSVVTRFTANISELNSMMLSTAATPGPPGTPICSSYLIPKEIQLPTTMTTFAEIQPLPAIEVTGGAQGATGVSPAQETPTGAESAPGKPDLEELVALTPPSPFRDSVDSGSTTPNSPVSESALCIPSSPKYDTLIIRDYTQSSSSL</sequence>
<feature type="signal peptide" evidence="4">
    <location>
        <begin position="1"/>
        <end position="20"/>
    </location>
</feature>
<feature type="chain" id="PRO_0000012933" description="Metabotropic glutamate receptor 5">
    <location>
        <begin position="21"/>
        <end position="1203"/>
    </location>
</feature>
<feature type="topological domain" description="Extracellular" evidence="1">
    <location>
        <begin position="21"/>
        <end position="579"/>
    </location>
</feature>
<feature type="transmembrane region" description="Helical; Name=1" evidence="1">
    <location>
        <begin position="580"/>
        <end position="602"/>
    </location>
</feature>
<feature type="topological domain" description="Cytoplasmic" evidence="1">
    <location>
        <begin position="603"/>
        <end position="612"/>
    </location>
</feature>
<feature type="transmembrane region" description="Helical; Name=2" evidence="1">
    <location>
        <begin position="613"/>
        <end position="635"/>
    </location>
</feature>
<feature type="topological domain" description="Extracellular" evidence="1">
    <location>
        <begin position="636"/>
        <end position="643"/>
    </location>
</feature>
<feature type="transmembrane region" description="Helical; Name=3" evidence="1">
    <location>
        <begin position="644"/>
        <end position="666"/>
    </location>
</feature>
<feature type="topological domain" description="Cytoplasmic" evidence="1">
    <location>
        <begin position="667"/>
        <end position="692"/>
    </location>
</feature>
<feature type="transmembrane region" description="Helical; Name=4" evidence="1">
    <location>
        <begin position="693"/>
        <end position="713"/>
    </location>
</feature>
<feature type="topological domain" description="Extracellular" evidence="1">
    <location>
        <begin position="714"/>
        <end position="736"/>
    </location>
</feature>
<feature type="transmembrane region" description="Helical; Name=5" evidence="1">
    <location>
        <begin position="737"/>
        <end position="758"/>
    </location>
</feature>
<feature type="topological domain" description="Cytoplasmic" evidence="1">
    <location>
        <begin position="759"/>
        <end position="771"/>
    </location>
</feature>
<feature type="transmembrane region" description="Helical; Name=6" evidence="1">
    <location>
        <begin position="772"/>
        <end position="794"/>
    </location>
</feature>
<feature type="topological domain" description="Extracellular" evidence="1">
    <location>
        <begin position="795"/>
        <end position="797"/>
    </location>
</feature>
<feature type="transmembrane region" description="Helical; Name=7" evidence="1">
    <location>
        <begin position="798"/>
        <end position="819"/>
    </location>
</feature>
<feature type="topological domain" description="Cytoplasmic" evidence="1">
    <location>
        <begin position="820"/>
        <end position="1203"/>
    </location>
</feature>
<feature type="region of interest" description="Disordered" evidence="5">
    <location>
        <begin position="892"/>
        <end position="970"/>
    </location>
</feature>
<feature type="region of interest" description="Disordered" evidence="5">
    <location>
        <begin position="1003"/>
        <end position="1054"/>
    </location>
</feature>
<feature type="region of interest" description="Disordered" evidence="5">
    <location>
        <begin position="1122"/>
        <end position="1182"/>
    </location>
</feature>
<feature type="compositionally biased region" description="Polar residues" evidence="5">
    <location>
        <begin position="905"/>
        <end position="920"/>
    </location>
</feature>
<feature type="compositionally biased region" description="Low complexity" evidence="5">
    <location>
        <begin position="1007"/>
        <end position="1017"/>
    </location>
</feature>
<feature type="compositionally biased region" description="Polar residues" evidence="5">
    <location>
        <begin position="1039"/>
        <end position="1054"/>
    </location>
</feature>
<feature type="compositionally biased region" description="Polar residues" evidence="5">
    <location>
        <begin position="1165"/>
        <end position="1176"/>
    </location>
</feature>
<feature type="binding site" evidence="1">
    <location>
        <position position="64"/>
    </location>
    <ligand>
        <name>L-glutamate</name>
        <dbReference type="ChEBI" id="CHEBI:29985"/>
    </ligand>
</feature>
<feature type="binding site" evidence="1">
    <location>
        <position position="151"/>
    </location>
    <ligand>
        <name>L-glutamate</name>
        <dbReference type="ChEBI" id="CHEBI:29985"/>
    </ligand>
</feature>
<feature type="binding site" evidence="1">
    <location>
        <begin position="172"/>
        <end position="174"/>
    </location>
    <ligand>
        <name>L-glutamate</name>
        <dbReference type="ChEBI" id="CHEBI:29985"/>
    </ligand>
</feature>
<feature type="binding site" evidence="1">
    <location>
        <position position="222"/>
    </location>
    <ligand>
        <name>L-glutamate</name>
        <dbReference type="ChEBI" id="CHEBI:29985"/>
    </ligand>
</feature>
<feature type="binding site" evidence="1">
    <location>
        <position position="304"/>
    </location>
    <ligand>
        <name>L-glutamate</name>
        <dbReference type="ChEBI" id="CHEBI:29985"/>
    </ligand>
</feature>
<feature type="binding site" evidence="1">
    <location>
        <position position="395"/>
    </location>
    <ligand>
        <name>L-glutamate</name>
        <dbReference type="ChEBI" id="CHEBI:29985"/>
    </ligand>
</feature>
<feature type="modified residue" description="Phosphoserine" evidence="16">
    <location>
        <position position="860"/>
    </location>
</feature>
<feature type="modified residue" description="Omega-N-methylarginine" evidence="3">
    <location>
        <position position="868"/>
    </location>
</feature>
<feature type="modified residue" description="Omega-N-methylarginine" evidence="3">
    <location>
        <position position="924"/>
    </location>
</feature>
<feature type="modified residue" description="Phosphoserine" evidence="16">
    <location>
        <position position="1014"/>
    </location>
</feature>
<feature type="modified residue" description="Phosphoserine" evidence="16">
    <location>
        <position position="1016"/>
    </location>
</feature>
<feature type="glycosylation site" description="N-linked (GlcNAc...) asparagine" evidence="4">
    <location>
        <position position="88"/>
    </location>
</feature>
<feature type="glycosylation site" description="N-linked (GlcNAc...) asparagine" evidence="4">
    <location>
        <position position="209"/>
    </location>
</feature>
<feature type="glycosylation site" description="N-linked (GlcNAc...) asparagine" evidence="4">
    <location>
        <position position="377"/>
    </location>
</feature>
<feature type="glycosylation site" description="N-linked (GlcNAc...) asparagine" evidence="4">
    <location>
        <position position="381"/>
    </location>
</feature>
<feature type="glycosylation site" description="N-linked (GlcNAc...) asparagine" evidence="4">
    <location>
        <position position="444"/>
    </location>
</feature>
<feature type="glycosylation site" description="N-linked (GlcNAc...) asparagine" evidence="4">
    <location>
        <position position="733"/>
    </location>
</feature>
<feature type="disulfide bond" evidence="1">
    <location>
        <begin position="57"/>
        <end position="99"/>
    </location>
</feature>
<feature type="disulfide bond" evidence="1">
    <location>
        <begin position="240"/>
        <end position="529"/>
    </location>
</feature>
<feature type="disulfide bond" evidence="1">
    <location>
        <begin position="275"/>
        <end position="277"/>
    </location>
</feature>
<feature type="disulfide bond" evidence="1">
    <location>
        <begin position="364"/>
        <end position="380"/>
    </location>
</feature>
<feature type="disulfide bond" evidence="1">
    <location>
        <begin position="418"/>
        <end position="425"/>
    </location>
</feature>
<feature type="disulfide bond" evidence="1">
    <location>
        <begin position="510"/>
        <end position="530"/>
    </location>
</feature>
<feature type="disulfide bond" evidence="1">
    <location>
        <begin position="514"/>
        <end position="533"/>
    </location>
</feature>
<feature type="disulfide bond" evidence="1">
    <location>
        <begin position="536"/>
        <end position="548"/>
    </location>
</feature>
<feature type="disulfide bond" evidence="1">
    <location>
        <begin position="551"/>
        <end position="564"/>
    </location>
</feature>
<feature type="disulfide bond" evidence="1">
    <location>
        <begin position="643"/>
        <end position="732"/>
    </location>
</feature>
<feature type="splice variant" id="VSP_002031" description="In isoform 1." evidence="14">
    <location>
        <begin position="876"/>
        <end position="907"/>
    </location>
</feature>
<feature type="mutagenesis site" description="Normal binding to HOMER1." evidence="13">
    <original>L</original>
    <variation>V</variation>
    <location>
        <position position="1154"/>
    </location>
</feature>
<feature type="mutagenesis site" description="Disrupts binding to HOMER1." evidence="13">
    <original>P</original>
    <variation>K</variation>
    <location>
        <position position="1156"/>
    </location>
</feature>
<feature type="mutagenesis site" description="Disrupts binding to HOMER1." evidence="13">
    <original>P</original>
    <variation>E</variation>
    <location>
        <position position="1157"/>
    </location>
</feature>
<feature type="mutagenesis site" description="Disrupts binding to HOMER1." evidence="13">
    <original>P</original>
    <variation>L</variation>
    <location>
        <position position="1157"/>
    </location>
</feature>
<feature type="mutagenesis site" description="Normal binding to HOMER1." evidence="13">
    <original>S</original>
    <variation>F</variation>
    <location>
        <position position="1158"/>
    </location>
</feature>
<feature type="mutagenesis site" description="Normal binding to HOMER1." evidence="13">
    <original>P</original>
    <variation>A</variation>
    <location>
        <position position="1159"/>
    </location>
</feature>
<feature type="mutagenesis site" description="Disrupts binding to HOMER1.">
    <original>F</original>
    <variation>R</variation>
    <location>
        <position position="1160"/>
    </location>
</feature>
<feature type="mutagenesis site" description="Normal binding to HOMER1." evidence="13">
    <original>R</original>
    <variation>T</variation>
    <location>
        <position position="1161"/>
    </location>
</feature>
<dbReference type="EMBL" id="D10891">
    <property type="protein sequence ID" value="BAA01711.1"/>
    <property type="molecule type" value="mRNA"/>
</dbReference>
<dbReference type="EMBL" id="S64315">
    <property type="protein sequence ID" value="AAB27666.1"/>
    <property type="molecule type" value="mRNA"/>
</dbReference>
<dbReference type="PIR" id="A42916">
    <property type="entry name" value="A42916"/>
</dbReference>
<dbReference type="PIR" id="PN0549">
    <property type="entry name" value="PN0549"/>
</dbReference>
<dbReference type="RefSeq" id="NP_058708.1">
    <molecule id="P31424-2"/>
    <property type="nucleotide sequence ID" value="NM_017012.2"/>
</dbReference>
<dbReference type="RefSeq" id="XP_006229721.1">
    <molecule id="P31424-1"/>
    <property type="nucleotide sequence ID" value="XM_006229659.5"/>
</dbReference>
<dbReference type="RefSeq" id="XP_017444267.1">
    <molecule id="P31424-1"/>
    <property type="nucleotide sequence ID" value="XM_017588778.3"/>
</dbReference>
<dbReference type="RefSeq" id="XP_017444268.1">
    <molecule id="P31424-1"/>
    <property type="nucleotide sequence ID" value="XM_017588779.3"/>
</dbReference>
<dbReference type="RefSeq" id="XP_017444269.1">
    <molecule id="P31424-1"/>
    <property type="nucleotide sequence ID" value="XM_017588780.3"/>
</dbReference>
<dbReference type="RefSeq" id="XP_017444270.1">
    <molecule id="P31424-2"/>
    <property type="nucleotide sequence ID" value="XM_017588781.3"/>
</dbReference>
<dbReference type="RefSeq" id="XP_038951960.1">
    <molecule id="P31424-1"/>
    <property type="nucleotide sequence ID" value="XM_039096032.2"/>
</dbReference>
<dbReference type="RefSeq" id="XP_063136790.1">
    <molecule id="P31424-2"/>
    <property type="nucleotide sequence ID" value="XM_063280720.1"/>
</dbReference>
<dbReference type="RefSeq" id="XP_063136792.1">
    <molecule id="P31424-2"/>
    <property type="nucleotide sequence ID" value="XM_063280722.1"/>
</dbReference>
<dbReference type="PDB" id="1DDV">
    <property type="method" value="X-ray"/>
    <property type="resolution" value="1.90 A"/>
    <property type="chains" value="B=1155-1160"/>
</dbReference>
<dbReference type="PDBsum" id="1DDV"/>
<dbReference type="SMR" id="P31424"/>
<dbReference type="BioGRID" id="246583">
    <property type="interactions" value="12"/>
</dbReference>
<dbReference type="CORUM" id="P31424"/>
<dbReference type="DIP" id="DIP-41263N"/>
<dbReference type="ELM" id="P31424"/>
<dbReference type="FunCoup" id="P31424">
    <property type="interactions" value="193"/>
</dbReference>
<dbReference type="IntAct" id="P31424">
    <property type="interactions" value="14"/>
</dbReference>
<dbReference type="MINT" id="P31424"/>
<dbReference type="STRING" id="10116.ENSRNOP00000022059"/>
<dbReference type="BindingDB" id="P31424"/>
<dbReference type="ChEMBL" id="CHEMBL2564"/>
<dbReference type="DrugCentral" id="P31424"/>
<dbReference type="GuidetoPHARMACOLOGY" id="293"/>
<dbReference type="GlyCosmos" id="P31424">
    <property type="glycosylation" value="6 sites, No reported glycans"/>
</dbReference>
<dbReference type="GlyGen" id="P31424">
    <property type="glycosylation" value="7 sites"/>
</dbReference>
<dbReference type="iPTMnet" id="P31424"/>
<dbReference type="PhosphoSitePlus" id="P31424"/>
<dbReference type="PaxDb" id="10116-ENSRNOP00000022059"/>
<dbReference type="ABCD" id="P31424">
    <property type="antibodies" value="2 sequenced antibodies"/>
</dbReference>
<dbReference type="Ensembl" id="ENSRNOT00000022060.6">
    <molecule id="P31424-1"/>
    <property type="protein sequence ID" value="ENSRNOP00000022059.5"/>
    <property type="gene ID" value="ENSRNOG00000016429.8"/>
</dbReference>
<dbReference type="Ensembl" id="ENSRNOT00000050639.3">
    <molecule id="P31424-2"/>
    <property type="protein sequence ID" value="ENSRNOP00000040016.3"/>
    <property type="gene ID" value="ENSRNOG00000016429.8"/>
</dbReference>
<dbReference type="GeneID" id="24418"/>
<dbReference type="KEGG" id="rno:24418"/>
<dbReference type="UCSC" id="RGD:2746">
    <molecule id="P31424-1"/>
    <property type="organism name" value="rat"/>
</dbReference>
<dbReference type="AGR" id="RGD:2746"/>
<dbReference type="CTD" id="2915"/>
<dbReference type="RGD" id="2746">
    <property type="gene designation" value="Grm5"/>
</dbReference>
<dbReference type="eggNOG" id="KOG1056">
    <property type="taxonomic scope" value="Eukaryota"/>
</dbReference>
<dbReference type="GeneTree" id="ENSGT01030000234595"/>
<dbReference type="HOGENOM" id="CLU_005389_0_1_1"/>
<dbReference type="InParanoid" id="P31424"/>
<dbReference type="OMA" id="NGDSPGX"/>
<dbReference type="OrthoDB" id="425344at2759"/>
<dbReference type="PhylomeDB" id="P31424"/>
<dbReference type="TreeFam" id="TF313240"/>
<dbReference type="Reactome" id="R-RNO-416476">
    <property type="pathway name" value="G alpha (q) signalling events"/>
</dbReference>
<dbReference type="Reactome" id="R-RNO-420499">
    <property type="pathway name" value="Class C/3 (Metabotropic glutamate/pheromone receptors)"/>
</dbReference>
<dbReference type="Reactome" id="R-RNO-6794361">
    <property type="pathway name" value="Neurexins and neuroligins"/>
</dbReference>
<dbReference type="EvolutionaryTrace" id="P31424"/>
<dbReference type="PRO" id="PR:P31424"/>
<dbReference type="Proteomes" id="UP000002494">
    <property type="component" value="Chromosome 1"/>
</dbReference>
<dbReference type="GO" id="GO:0097449">
    <property type="term" value="C:astrocyte projection"/>
    <property type="evidence" value="ECO:0000314"/>
    <property type="project" value="RGD"/>
</dbReference>
<dbReference type="GO" id="GO:0005737">
    <property type="term" value="C:cytoplasm"/>
    <property type="evidence" value="ECO:0000266"/>
    <property type="project" value="RGD"/>
</dbReference>
<dbReference type="GO" id="GO:0030425">
    <property type="term" value="C:dendrite"/>
    <property type="evidence" value="ECO:0000266"/>
    <property type="project" value="RGD"/>
</dbReference>
<dbReference type="GO" id="GO:0043198">
    <property type="term" value="C:dendritic shaft"/>
    <property type="evidence" value="ECO:0000314"/>
    <property type="project" value="RGD"/>
</dbReference>
<dbReference type="GO" id="GO:0043197">
    <property type="term" value="C:dendritic spine"/>
    <property type="evidence" value="ECO:0000314"/>
    <property type="project" value="RGD"/>
</dbReference>
<dbReference type="GO" id="GO:0098978">
    <property type="term" value="C:glutamatergic synapse"/>
    <property type="evidence" value="ECO:0000314"/>
    <property type="project" value="SynGO"/>
</dbReference>
<dbReference type="GO" id="GO:0043005">
    <property type="term" value="C:neuron projection"/>
    <property type="evidence" value="ECO:0000314"/>
    <property type="project" value="RGD"/>
</dbReference>
<dbReference type="GO" id="GO:0043025">
    <property type="term" value="C:neuronal cell body"/>
    <property type="evidence" value="ECO:0000314"/>
    <property type="project" value="RGD"/>
</dbReference>
<dbReference type="GO" id="GO:0005886">
    <property type="term" value="C:plasma membrane"/>
    <property type="evidence" value="ECO:0000250"/>
    <property type="project" value="UniProtKB"/>
</dbReference>
<dbReference type="GO" id="GO:0098839">
    <property type="term" value="C:postsynaptic density membrane"/>
    <property type="evidence" value="ECO:0000318"/>
    <property type="project" value="GO_Central"/>
</dbReference>
<dbReference type="GO" id="GO:0045211">
    <property type="term" value="C:postsynaptic membrane"/>
    <property type="evidence" value="ECO:0000314"/>
    <property type="project" value="SynGO"/>
</dbReference>
<dbReference type="GO" id="GO:0098685">
    <property type="term" value="C:Schaffer collateral - CA1 synapse"/>
    <property type="evidence" value="ECO:0000266"/>
    <property type="project" value="RGD"/>
</dbReference>
<dbReference type="GO" id="GO:0031687">
    <property type="term" value="F:A2A adenosine receptor binding"/>
    <property type="evidence" value="ECO:0000353"/>
    <property type="project" value="RGD"/>
</dbReference>
<dbReference type="GO" id="GO:0001640">
    <property type="term" value="F:adenylate cyclase inhibiting G protein-coupled glutamate receptor activity"/>
    <property type="evidence" value="ECO:0000318"/>
    <property type="project" value="GO_Central"/>
</dbReference>
<dbReference type="GO" id="GO:0005516">
    <property type="term" value="F:calmodulin binding"/>
    <property type="evidence" value="ECO:0000304"/>
    <property type="project" value="UniProtKB"/>
</dbReference>
<dbReference type="GO" id="GO:0004930">
    <property type="term" value="F:G protein-coupled receptor activity"/>
    <property type="evidence" value="ECO:0000250"/>
    <property type="project" value="UniProtKB"/>
</dbReference>
<dbReference type="GO" id="GO:0099530">
    <property type="term" value="F:G protein-coupled receptor activity involved in regulation of postsynaptic membrane potential"/>
    <property type="evidence" value="ECO:0000318"/>
    <property type="project" value="GO_Central"/>
</dbReference>
<dbReference type="GO" id="GO:0008066">
    <property type="term" value="F:glutamate receptor activity"/>
    <property type="evidence" value="ECO:0000315"/>
    <property type="project" value="UniProtKB"/>
</dbReference>
<dbReference type="GO" id="GO:0042802">
    <property type="term" value="F:identical protein binding"/>
    <property type="evidence" value="ECO:0000266"/>
    <property type="project" value="RGD"/>
</dbReference>
<dbReference type="GO" id="GO:0099583">
    <property type="term" value="F:neurotransmitter receptor activity involved in regulation of postsynaptic cytosolic calcium ion concentration"/>
    <property type="evidence" value="ECO:0000318"/>
    <property type="project" value="GO_Central"/>
</dbReference>
<dbReference type="GO" id="GO:0030165">
    <property type="term" value="F:PDZ domain binding"/>
    <property type="evidence" value="ECO:0000304"/>
    <property type="project" value="UniProtKB"/>
</dbReference>
<dbReference type="GO" id="GO:0001639">
    <property type="term" value="F:PLC activating G protein-coupled glutamate receptor activity"/>
    <property type="evidence" value="ECO:0000304"/>
    <property type="project" value="UniProtKB"/>
</dbReference>
<dbReference type="GO" id="GO:0030296">
    <property type="term" value="F:protein tyrosine kinase activator activity"/>
    <property type="evidence" value="ECO:0000316"/>
    <property type="project" value="ARUK-UCL"/>
</dbReference>
<dbReference type="GO" id="GO:1990782">
    <property type="term" value="F:protein tyrosine kinase binding"/>
    <property type="evidence" value="ECO:0000353"/>
    <property type="project" value="ARUK-UCL"/>
</dbReference>
<dbReference type="GO" id="GO:1904646">
    <property type="term" value="P:cellular response to amyloid-beta"/>
    <property type="evidence" value="ECO:0000266"/>
    <property type="project" value="RGD"/>
</dbReference>
<dbReference type="GO" id="GO:0007268">
    <property type="term" value="P:chemical synaptic transmission"/>
    <property type="evidence" value="ECO:0000315"/>
    <property type="project" value="RGD"/>
</dbReference>
<dbReference type="GO" id="GO:0050890">
    <property type="term" value="P:cognition"/>
    <property type="evidence" value="ECO:0000266"/>
    <property type="project" value="RGD"/>
</dbReference>
<dbReference type="GO" id="GO:0002029">
    <property type="term" value="P:desensitization of G protein-coupled receptor signaling pathway"/>
    <property type="evidence" value="ECO:0000314"/>
    <property type="project" value="UniProtKB"/>
</dbReference>
<dbReference type="GO" id="GO:0007216">
    <property type="term" value="P:G protein-coupled glutamate receptor signaling pathway"/>
    <property type="evidence" value="ECO:0000315"/>
    <property type="project" value="UniProtKB"/>
</dbReference>
<dbReference type="GO" id="GO:0007612">
    <property type="term" value="P:learning"/>
    <property type="evidence" value="ECO:0000266"/>
    <property type="project" value="RGD"/>
</dbReference>
<dbReference type="GO" id="GO:0007611">
    <property type="term" value="P:learning or memory"/>
    <property type="evidence" value="ECO:0000266"/>
    <property type="project" value="RGD"/>
</dbReference>
<dbReference type="GO" id="GO:0007626">
    <property type="term" value="P:locomotory behavior"/>
    <property type="evidence" value="ECO:0000266"/>
    <property type="project" value="RGD"/>
</dbReference>
<dbReference type="GO" id="GO:0050804">
    <property type="term" value="P:modulation of chemical synaptic transmission"/>
    <property type="evidence" value="ECO:0000266"/>
    <property type="project" value="RGD"/>
</dbReference>
<dbReference type="GO" id="GO:0048015">
    <property type="term" value="P:phosphatidylinositol-mediated signaling"/>
    <property type="evidence" value="ECO:0000304"/>
    <property type="project" value="UniProtKB"/>
</dbReference>
<dbReference type="GO" id="GO:0007206">
    <property type="term" value="P:phospholipase C-activating G protein-coupled glutamate receptor signaling pathway"/>
    <property type="evidence" value="ECO:0000266"/>
    <property type="project" value="RGD"/>
</dbReference>
<dbReference type="GO" id="GO:0007200">
    <property type="term" value="P:phospholipase C-activating G protein-coupled receptor signaling pathway"/>
    <property type="evidence" value="ECO:0000304"/>
    <property type="project" value="UniProtKB"/>
</dbReference>
<dbReference type="GO" id="GO:0050850">
    <property type="term" value="P:positive regulation of calcium-mediated signaling"/>
    <property type="evidence" value="ECO:0000266"/>
    <property type="project" value="RGD"/>
</dbReference>
<dbReference type="GO" id="GO:0048170">
    <property type="term" value="P:positive regulation of long-term neuronal synaptic plasticity"/>
    <property type="evidence" value="ECO:0000314"/>
    <property type="project" value="RGD"/>
</dbReference>
<dbReference type="GO" id="GO:0043410">
    <property type="term" value="P:positive regulation of MAPK cascade"/>
    <property type="evidence" value="ECO:0000314"/>
    <property type="project" value="UniProtKB"/>
</dbReference>
<dbReference type="GO" id="GO:0006468">
    <property type="term" value="P:protein phosphorylation"/>
    <property type="evidence" value="ECO:0000314"/>
    <property type="project" value="UniProtKB"/>
</dbReference>
<dbReference type="GO" id="GO:0006355">
    <property type="term" value="P:regulation of DNA-templated transcription"/>
    <property type="evidence" value="ECO:0000314"/>
    <property type="project" value="RGD"/>
</dbReference>
<dbReference type="GO" id="GO:0048169">
    <property type="term" value="P:regulation of long-term neuronal synaptic plasticity"/>
    <property type="evidence" value="ECO:0000266"/>
    <property type="project" value="RGD"/>
</dbReference>
<dbReference type="GO" id="GO:0051966">
    <property type="term" value="P:regulation of synaptic transmission, glutamatergic"/>
    <property type="evidence" value="ECO:0000318"/>
    <property type="project" value="GO_Central"/>
</dbReference>
<dbReference type="GO" id="GO:0050808">
    <property type="term" value="P:synapse organization"/>
    <property type="evidence" value="ECO:0000266"/>
    <property type="project" value="RGD"/>
</dbReference>
<dbReference type="CDD" id="cd15450">
    <property type="entry name" value="7tmC_mGluR5"/>
    <property type="match status" value="1"/>
</dbReference>
<dbReference type="CDD" id="cd06374">
    <property type="entry name" value="PBP1_mGluR_groupI"/>
    <property type="match status" value="1"/>
</dbReference>
<dbReference type="FunFam" id="3.40.50.2300:FF:000219">
    <property type="entry name" value="Glutamate metabotropic receptor 5"/>
    <property type="match status" value="1"/>
</dbReference>
<dbReference type="FunFam" id="2.10.50.30:FF:000001">
    <property type="entry name" value="metabotropic glutamate receptor 1"/>
    <property type="match status" value="1"/>
</dbReference>
<dbReference type="FunFam" id="3.40.50.2300:FF:000243">
    <property type="entry name" value="Metabotropic glutamate receptor 5"/>
    <property type="match status" value="1"/>
</dbReference>
<dbReference type="Gene3D" id="3.40.50.2300">
    <property type="match status" value="2"/>
</dbReference>
<dbReference type="Gene3D" id="2.10.50.30">
    <property type="entry name" value="GPCR, family 3, nine cysteines domain"/>
    <property type="match status" value="1"/>
</dbReference>
<dbReference type="InterPro" id="IPR001828">
    <property type="entry name" value="ANF_lig-bd_rcpt"/>
</dbReference>
<dbReference type="InterPro" id="IPR000337">
    <property type="entry name" value="GPCR_3"/>
</dbReference>
<dbReference type="InterPro" id="IPR011500">
    <property type="entry name" value="GPCR_3_9-Cys_dom"/>
</dbReference>
<dbReference type="InterPro" id="IPR038550">
    <property type="entry name" value="GPCR_3_9-Cys_sf"/>
</dbReference>
<dbReference type="InterPro" id="IPR017978">
    <property type="entry name" value="GPCR_3_C"/>
</dbReference>
<dbReference type="InterPro" id="IPR017979">
    <property type="entry name" value="GPCR_3_CS"/>
</dbReference>
<dbReference type="InterPro" id="IPR000202">
    <property type="entry name" value="GPCR_3_mGluR5"/>
</dbReference>
<dbReference type="InterPro" id="IPR000162">
    <property type="entry name" value="GPCR_3_mtglu_rcpt"/>
</dbReference>
<dbReference type="InterPro" id="IPR019588">
    <property type="entry name" value="Metabotropic_Glu_rcpt_Homer-bd"/>
</dbReference>
<dbReference type="InterPro" id="IPR050726">
    <property type="entry name" value="mGluR"/>
</dbReference>
<dbReference type="InterPro" id="IPR028082">
    <property type="entry name" value="Peripla_BP_I"/>
</dbReference>
<dbReference type="PANTHER" id="PTHR24060">
    <property type="entry name" value="METABOTROPIC GLUTAMATE RECEPTOR"/>
    <property type="match status" value="1"/>
</dbReference>
<dbReference type="Pfam" id="PF00003">
    <property type="entry name" value="7tm_3"/>
    <property type="match status" value="1"/>
</dbReference>
<dbReference type="Pfam" id="PF01094">
    <property type="entry name" value="ANF_receptor"/>
    <property type="match status" value="1"/>
</dbReference>
<dbReference type="Pfam" id="PF10606">
    <property type="entry name" value="GluR_Homer-bdg"/>
    <property type="match status" value="1"/>
</dbReference>
<dbReference type="Pfam" id="PF07562">
    <property type="entry name" value="NCD3G"/>
    <property type="match status" value="1"/>
</dbReference>
<dbReference type="PRINTS" id="PR00248">
    <property type="entry name" value="GPCRMGR"/>
</dbReference>
<dbReference type="PRINTS" id="PR01055">
    <property type="entry name" value="MTABOTROPC5R"/>
</dbReference>
<dbReference type="PRINTS" id="PR00593">
    <property type="entry name" value="MTABOTROPICR"/>
</dbReference>
<dbReference type="SMART" id="SM01229">
    <property type="entry name" value="GluR_Homer-bdg"/>
    <property type="match status" value="1"/>
</dbReference>
<dbReference type="SUPFAM" id="SSF53822">
    <property type="entry name" value="Periplasmic binding protein-like I"/>
    <property type="match status" value="1"/>
</dbReference>
<dbReference type="PROSITE" id="PS00979">
    <property type="entry name" value="G_PROTEIN_RECEP_F3_1"/>
    <property type="match status" value="1"/>
</dbReference>
<dbReference type="PROSITE" id="PS00980">
    <property type="entry name" value="G_PROTEIN_RECEP_F3_2"/>
    <property type="match status" value="1"/>
</dbReference>
<dbReference type="PROSITE" id="PS00981">
    <property type="entry name" value="G_PROTEIN_RECEP_F3_3"/>
    <property type="match status" value="1"/>
</dbReference>
<dbReference type="PROSITE" id="PS50259">
    <property type="entry name" value="G_PROTEIN_RECEP_F3_4"/>
    <property type="match status" value="1"/>
</dbReference>
<keyword id="KW-0002">3D-structure</keyword>
<keyword id="KW-0025">Alternative splicing</keyword>
<keyword id="KW-1003">Cell membrane</keyword>
<keyword id="KW-1015">Disulfide bond</keyword>
<keyword id="KW-0297">G-protein coupled receptor</keyword>
<keyword id="KW-0325">Glycoprotein</keyword>
<keyword id="KW-0472">Membrane</keyword>
<keyword id="KW-0488">Methylation</keyword>
<keyword id="KW-0597">Phosphoprotein</keyword>
<keyword id="KW-0675">Receptor</keyword>
<keyword id="KW-1185">Reference proteome</keyword>
<keyword id="KW-0732">Signal</keyword>
<keyword id="KW-0807">Transducer</keyword>
<keyword id="KW-0812">Transmembrane</keyword>
<keyword id="KW-1133">Transmembrane helix</keyword>
<proteinExistence type="evidence at protein level"/>
<reference key="1">
    <citation type="journal article" date="1992" name="J. Biol. Chem.">
        <title>Molecular characterization of a novel metabotropic glutamate receptor mGluR5 coupled to inositol phosphate/Ca2+ signal transduction.</title>
        <authorList>
            <person name="Abe T."/>
            <person name="Sugihara H."/>
            <person name="Nawa H."/>
            <person name="Shigemoto R."/>
            <person name="Mizuno N."/>
            <person name="Nakanishi S."/>
        </authorList>
    </citation>
    <scope>NUCLEOTIDE SEQUENCE [MRNA] (ISOFORM 1)</scope>
    <scope>FUNCTION</scope>
    <scope>SUBCELLULAR LOCATION</scope>
    <scope>TISSUE SPECIFICITY</scope>
    <source>
        <tissue>Brain</tissue>
    </source>
</reference>
<reference key="2">
    <citation type="journal article" date="1993" name="Biochem. Biophys. Res. Commun.">
        <title>A variant of metabotropic glutamate receptor subtype 5: an evolutionally conserved insertion with no termination codon.</title>
        <authorList>
            <person name="Minakami R."/>
            <person name="Katsuki F."/>
            <person name="Sugiyama H."/>
        </authorList>
    </citation>
    <scope>NUCLEOTIDE SEQUENCE [MRNA] OF 859-923</scope>
    <scope>ALTERNATIVE SPLICING</scope>
    <source>
        <tissue>Brain</tissue>
    </source>
</reference>
<reference key="3">
    <citation type="journal article" date="1998" name="Neuron">
        <title>Homer binds a novel proline-rich motif and links group 1 metabotropic glutamate receptors with IP3 receptors.</title>
        <authorList>
            <person name="Tu J.C."/>
            <person name="Xiao B."/>
            <person name="Yuan J.P."/>
            <person name="Lanahan A.A."/>
            <person name="Leoffert K."/>
            <person name="Li M."/>
            <person name="Linden D.J."/>
            <person name="Worley P.F."/>
        </authorList>
    </citation>
    <scope>INTERACTION WITH HOMER1; HOMER2 AND HOMER3</scope>
    <scope>MUTAGENESIS OF LEU-1154; PRO-1156; PRO-1157; SER-1158; PRO-1159 AND ARG-1161</scope>
</reference>
<reference key="4">
    <citation type="journal article" date="1999" name="Genes Cells">
        <title>Competitive interaction of seven in absentia homolog-1A and Ca2+/calmodulin with the cytoplasmic tail of group 1 metabotropic glutamate receptors.</title>
        <authorList>
            <person name="Ishikawa K."/>
            <person name="Nash S.R."/>
            <person name="Nishimune A."/>
            <person name="Neki A."/>
            <person name="Kaneko S."/>
            <person name="Nakanishi S."/>
        </authorList>
    </citation>
    <scope>INTERACTION WITH SIAH1</scope>
</reference>
<reference key="5">
    <citation type="journal article" date="2002" name="J. Neurosci.">
        <title>Tamalin, a PDZ domain-containing protein, links a protein complex formation of group 1 metabotropic glutamate receptors and the guanine nucleotide exchange factor cytohesins.</title>
        <authorList>
            <person name="Kitano J."/>
            <person name="Kimura K."/>
            <person name="Yamazaki Y."/>
            <person name="Soda T."/>
            <person name="Shigemoto R."/>
            <person name="Nakajima Y."/>
            <person name="Nakanishi S."/>
        </authorList>
    </citation>
    <scope>INTERACTION WITH TAMALIN</scope>
</reference>
<reference key="6">
    <citation type="journal article" date="2009" name="J. Neurochem.">
        <title>The association of metabotropic glutamate receptor type 5 with the neuronal Ca2+-binding protein 2 modulates receptor function.</title>
        <authorList>
            <person name="Canela L."/>
            <person name="Fernandez-Duenas V."/>
            <person name="Albergaria C."/>
            <person name="Watanabe M."/>
            <person name="Lluis C."/>
            <person name="Mallol J."/>
            <person name="Canela E.I."/>
            <person name="Franco R."/>
            <person name="Lujan R."/>
            <person name="Ciruela F."/>
        </authorList>
    </citation>
    <scope>INTERACTION WITH NECAB2</scope>
</reference>
<reference key="7">
    <citation type="journal article" date="2009" name="Science">
        <title>Norbin is an endogenous regulator of metabotropic glutamate receptor 5 signaling.</title>
        <authorList>
            <person name="Wang H."/>
            <person name="Westin L."/>
            <person name="Nong Y."/>
            <person name="Birnbaum S."/>
            <person name="Bendor J."/>
            <person name="Brismar H."/>
            <person name="Nestler E."/>
            <person name="Aperia A."/>
            <person name="Flajolet M."/>
            <person name="Greengard P."/>
        </authorList>
    </citation>
    <scope>INTERACTION WITH NCDN</scope>
</reference>
<reference key="8">
    <citation type="journal article" date="2011" name="J. Biol. Chem.">
        <title>Importance of Shank3 protein in regulating metabotropic glutamate receptor 5 (mGluR5) expression and signaling at synapses.</title>
        <authorList>
            <person name="Verpelli C."/>
            <person name="Dvoretskova E."/>
            <person name="Vicidomini C."/>
            <person name="Rossi F."/>
            <person name="Chiappalone M."/>
            <person name="Schoen M."/>
            <person name="Di Stefano B."/>
            <person name="Mantegazza R."/>
            <person name="Broccoli V."/>
            <person name="Boeckers T.M."/>
            <person name="Dityatev A."/>
            <person name="Sala C."/>
        </authorList>
    </citation>
    <scope>FUNCTION IN SYNAPTIC ACTIVITY</scope>
    <scope>TISSUE SPECIFICITY</scope>
</reference>
<reference key="9">
    <citation type="journal article" date="2012" name="Nat. Commun.">
        <title>Quantitative maps of protein phosphorylation sites across 14 different rat organs and tissues.</title>
        <authorList>
            <person name="Lundby A."/>
            <person name="Secher A."/>
            <person name="Lage K."/>
            <person name="Nordsborg N.B."/>
            <person name="Dmytriyev A."/>
            <person name="Lundby C."/>
            <person name="Olsen J.V."/>
        </authorList>
    </citation>
    <scope>PHOSPHORYLATION [LARGE SCALE ANALYSIS] AT SER-860; SER-1014 AND SER-1016</scope>
    <scope>IDENTIFICATION BY MASS SPECTROMETRY [LARGE SCALE ANALYSIS]</scope>
</reference>
<reference key="10">
    <citation type="journal article" date="2000" name="Neuron">
        <title>Structure of the Homer EVH1 domain-peptide complex reveals a new twist in polyproline recognition.</title>
        <authorList>
            <person name="Beneken J."/>
            <person name="Tu J.C."/>
            <person name="Xiao B."/>
            <person name="Nuriya M."/>
            <person name="Yuan J.P."/>
            <person name="Worley P.F."/>
            <person name="Leahy D.J."/>
        </authorList>
    </citation>
    <scope>X-RAY CRYSTALLOGRAPHY (1.9 ANGSTROMS) OF 1155-1160 IN COMPLEX WITH HOMER1</scope>
</reference>
<protein>
    <recommendedName>
        <fullName>Metabotropic glutamate receptor 5</fullName>
        <shortName>mGluR5</shortName>
    </recommendedName>
</protein>
<name>GRM5_RAT</name>
<comment type="function">
    <text evidence="9 12">G-protein coupled receptor for glutamate. Ligand binding causes a conformation change that triggers signaling via guanine nucleotide-binding proteins (G proteins) and modulates the activity of down-stream effectors. Signaling activates a phosphatidylinositol-calcium second messenger system and generates a calcium-activated chloride current. Plays an important role in the regulation of synaptic plasticity and the modulation of the neural network activity.</text>
</comment>
<comment type="subunit">
    <text evidence="2 6 7 8 10 11 13">Interacts with RYR1, RYR2, ITPR1, SHANK1 and SHANK3. The PPXXF motif binds HOMER1, HOMER2 and HOMER3. Interacts with SIAH1 and TAMALIN. Interacts with NCDN. Interacts with NECAB2. Interacts with CAMK2A (By similarity).</text>
</comment>
<comment type="interaction">
    <interactant intactId="EBI-2902734">
        <id>P31424</id>
    </interactant>
    <interactant intactId="EBI-80049">
        <id>P63088</id>
        <label>Ppp1cc</label>
    </interactant>
    <organismsDiffer>false</organismsDiffer>
    <experiments>19</experiments>
</comment>
<comment type="interaction">
    <interactant intactId="EBI-2902734">
        <id>P31424</id>
    </interactant>
    <interactant intactId="EBI-7361884">
        <id>Q8R4T5</id>
        <label>Tamalin</label>
    </interactant>
    <organismsDiffer>false</organismsDiffer>
    <experiments>5</experiments>
</comment>
<comment type="interaction">
    <interactant intactId="EBI-2902778">
        <id>P31424-1</id>
    </interactant>
    <interactant intactId="EBI-2902702">
        <id>P29274</id>
        <label>ADORA2A</label>
    </interactant>
    <organismsDiffer>true</organismsDiffer>
    <experiments>3</experiments>
</comment>
<comment type="interaction">
    <interactant intactId="EBI-8830305">
        <id>P31424-2</id>
    </interactant>
    <interactant intactId="EBI-515315">
        <id>P06241</id>
        <label>FYN</label>
    </interactant>
    <organismsDiffer>true</organismsDiffer>
    <experiments>2</experiments>
</comment>
<comment type="interaction">
    <interactant intactId="EBI-8830305">
        <id>P31424-2</id>
    </interactant>
    <interactant intactId="EBI-714158">
        <id>Q13526</id>
        <label>PIN1</label>
    </interactant>
    <organismsDiffer>true</organismsDiffer>
    <experiments>3</experiments>
</comment>
<comment type="interaction">
    <interactant intactId="EBI-8830305">
        <id>P31424-2</id>
    </interactant>
    <interactant intactId="EBI-8830282">
        <id>PRO_0000025675</id>
        <label>PRNP</label>
        <dbReference type="UniProtKB" id="P04156"/>
    </interactant>
    <organismsDiffer>true</organismsDiffer>
    <experiments>4</experiments>
</comment>
<comment type="subcellular location">
    <subcellularLocation>
        <location evidence="9">Cell membrane</location>
        <topology evidence="9">Multi-pass membrane protein</topology>
    </subcellularLocation>
</comment>
<comment type="alternative products">
    <event type="alternative splicing"/>
    <isoform>
        <id>P31424-1</id>
        <name>2</name>
        <name>5b</name>
        <sequence type="displayed"/>
    </isoform>
    <isoform>
        <id>P31424-2</id>
        <name>1</name>
        <name>5a</name>
        <sequence type="described" ref="VSP_002031"/>
    </isoform>
</comment>
<comment type="tissue specificity">
    <text evidence="9 12">Widely distributed in neuronal cells of the central nervous system.</text>
</comment>
<comment type="miscellaneous">
    <text>Activated by quisqualate &gt; glutamate &gt; ibotenate &gt; trans-1- aminocyclopentyl-1,3-dicarboxylate.</text>
</comment>
<comment type="similarity">
    <text evidence="15">Belongs to the G-protein coupled receptor 3 family.</text>
</comment>